<dbReference type="PIR" id="S06584">
    <property type="entry name" value="S06584"/>
</dbReference>
<dbReference type="SMR" id="P18736"/>
<dbReference type="Proteomes" id="UP000186698">
    <property type="component" value="Unplaced"/>
</dbReference>
<dbReference type="GO" id="GO:0005634">
    <property type="term" value="C:nucleus"/>
    <property type="evidence" value="ECO:0007669"/>
    <property type="project" value="UniProtKB-SubCell"/>
</dbReference>
<dbReference type="GO" id="GO:0003700">
    <property type="term" value="F:DNA-binding transcription factor activity"/>
    <property type="evidence" value="ECO:0000318"/>
    <property type="project" value="GO_Central"/>
</dbReference>
<dbReference type="GO" id="GO:0000981">
    <property type="term" value="F:DNA-binding transcription factor activity, RNA polymerase II-specific"/>
    <property type="evidence" value="ECO:0007669"/>
    <property type="project" value="TreeGrafter"/>
</dbReference>
<dbReference type="GO" id="GO:0000978">
    <property type="term" value="F:RNA polymerase II cis-regulatory region sequence-specific DNA binding"/>
    <property type="evidence" value="ECO:0000318"/>
    <property type="project" value="GO_Central"/>
</dbReference>
<dbReference type="GO" id="GO:0008270">
    <property type="term" value="F:zinc ion binding"/>
    <property type="evidence" value="ECO:0007669"/>
    <property type="project" value="UniProtKB-KW"/>
</dbReference>
<dbReference type="GO" id="GO:0006357">
    <property type="term" value="P:regulation of transcription by RNA polymerase II"/>
    <property type="evidence" value="ECO:0000318"/>
    <property type="project" value="GO_Central"/>
</dbReference>
<dbReference type="FunFam" id="3.30.160.60:FF:001007">
    <property type="entry name" value="Zinc finger protein 1184"/>
    <property type="match status" value="2"/>
</dbReference>
<dbReference type="FunFam" id="3.30.160.60:FF:000358">
    <property type="entry name" value="zinc finger protein 24"/>
    <property type="match status" value="1"/>
</dbReference>
<dbReference type="FunFam" id="3.30.160.60:FF:000936">
    <property type="entry name" value="Zinc finger protein 577"/>
    <property type="match status" value="2"/>
</dbReference>
<dbReference type="Gene3D" id="3.30.160.60">
    <property type="entry name" value="Classic Zinc Finger"/>
    <property type="match status" value="5"/>
</dbReference>
<dbReference type="InterPro" id="IPR036236">
    <property type="entry name" value="Znf_C2H2_sf"/>
</dbReference>
<dbReference type="InterPro" id="IPR013087">
    <property type="entry name" value="Znf_C2H2_type"/>
</dbReference>
<dbReference type="PANTHER" id="PTHR24394">
    <property type="entry name" value="ZINC FINGER PROTEIN"/>
    <property type="match status" value="1"/>
</dbReference>
<dbReference type="PANTHER" id="PTHR24394:SF48">
    <property type="entry name" value="ZINC FINGER PROTEIN 771"/>
    <property type="match status" value="1"/>
</dbReference>
<dbReference type="Pfam" id="PF00096">
    <property type="entry name" value="zf-C2H2"/>
    <property type="match status" value="5"/>
</dbReference>
<dbReference type="SMART" id="SM00355">
    <property type="entry name" value="ZnF_C2H2"/>
    <property type="match status" value="5"/>
</dbReference>
<dbReference type="SUPFAM" id="SSF57667">
    <property type="entry name" value="beta-beta-alpha zinc fingers"/>
    <property type="match status" value="3"/>
</dbReference>
<dbReference type="PROSITE" id="PS00028">
    <property type="entry name" value="ZINC_FINGER_C2H2_1"/>
    <property type="match status" value="5"/>
</dbReference>
<dbReference type="PROSITE" id="PS50157">
    <property type="entry name" value="ZINC_FINGER_C2H2_2"/>
    <property type="match status" value="5"/>
</dbReference>
<accession>P18736</accession>
<name>ZG71_XENLA</name>
<reference key="1">
    <citation type="journal article" date="1989" name="J. Mol. Biol.">
        <title>Second-order repeats in Xenopus laevis finger proteins.</title>
        <authorList>
            <person name="Nietfeld W."/>
            <person name="El-Baradi T."/>
            <person name="Mentzel H."/>
            <person name="Pieler T."/>
            <person name="Koester M."/>
            <person name="Poeting A."/>
            <person name="Knoechel W."/>
        </authorList>
    </citation>
    <scope>NUCLEOTIDE SEQUENCE</scope>
</reference>
<proteinExistence type="inferred from homology"/>
<sequence>TGEKPFSCSTCGKCFLDRSHLTRHQRIHTREKPFSCSVCKKCFLDQSSLTRHQLIHTADKNFSCLECEKCFSKQSSLVSHQRTHTGEKPFSCSECDKCFAFSSELIVHQRTHTGEKPFSCSECEKCFSKQSSLTRHQMIH</sequence>
<evidence type="ECO:0000255" key="1">
    <source>
        <dbReference type="PROSITE-ProRule" id="PRU00042"/>
    </source>
</evidence>
<evidence type="ECO:0000305" key="2"/>
<comment type="function">
    <text>May be involved in transcriptional regulation.</text>
</comment>
<comment type="subcellular location">
    <subcellularLocation>
        <location evidence="2">Nucleus</location>
    </subcellularLocation>
</comment>
<comment type="similarity">
    <text evidence="2">Belongs to the krueppel C2H2-type zinc-finger protein family.</text>
</comment>
<organism>
    <name type="scientific">Xenopus laevis</name>
    <name type="common">African clawed frog</name>
    <dbReference type="NCBI Taxonomy" id="8355"/>
    <lineage>
        <taxon>Eukaryota</taxon>
        <taxon>Metazoa</taxon>
        <taxon>Chordata</taxon>
        <taxon>Craniata</taxon>
        <taxon>Vertebrata</taxon>
        <taxon>Euteleostomi</taxon>
        <taxon>Amphibia</taxon>
        <taxon>Batrachia</taxon>
        <taxon>Anura</taxon>
        <taxon>Pipoidea</taxon>
        <taxon>Pipidae</taxon>
        <taxon>Xenopodinae</taxon>
        <taxon>Xenopus</taxon>
        <taxon>Xenopus</taxon>
    </lineage>
</organism>
<feature type="chain" id="PRO_0000047807" description="Gastrula zinc finger protein XlCGF71.1">
    <location>
        <begin position="1" status="less than"/>
        <end position="140" status="greater than"/>
    </location>
</feature>
<feature type="zinc finger region" description="C2H2-type 1" evidence="1">
    <location>
        <begin position="6"/>
        <end position="28"/>
    </location>
</feature>
<feature type="zinc finger region" description="C2H2-type 2" evidence="1">
    <location>
        <begin position="34"/>
        <end position="56"/>
    </location>
</feature>
<feature type="zinc finger region" description="C2H2-type 3" evidence="1">
    <location>
        <begin position="62"/>
        <end position="84"/>
    </location>
</feature>
<feature type="zinc finger region" description="C2H2-type 4" evidence="1">
    <location>
        <begin position="90"/>
        <end position="112"/>
    </location>
</feature>
<feature type="zinc finger region" description="C2H2-type 5" evidence="1">
    <location>
        <begin position="118"/>
        <end position="140"/>
    </location>
</feature>
<feature type="non-terminal residue">
    <location>
        <position position="1"/>
    </location>
</feature>
<feature type="non-terminal residue">
    <location>
        <position position="140"/>
    </location>
</feature>
<keyword id="KW-0238">DNA-binding</keyword>
<keyword id="KW-0479">Metal-binding</keyword>
<keyword id="KW-0539">Nucleus</keyword>
<keyword id="KW-1185">Reference proteome</keyword>
<keyword id="KW-0677">Repeat</keyword>
<keyword id="KW-0804">Transcription</keyword>
<keyword id="KW-0805">Transcription regulation</keyword>
<keyword id="KW-0862">Zinc</keyword>
<keyword id="KW-0863">Zinc-finger</keyword>
<protein>
    <recommendedName>
        <fullName>Gastrula zinc finger protein XlCGF71.1</fullName>
    </recommendedName>
</protein>